<gene>
    <name evidence="1" type="primary">rapZ</name>
    <name type="ordered locus">EFER_3182</name>
</gene>
<name>RAPZ_ESCF3</name>
<proteinExistence type="inferred from homology"/>
<reference key="1">
    <citation type="journal article" date="2009" name="PLoS Genet.">
        <title>Organised genome dynamics in the Escherichia coli species results in highly diverse adaptive paths.</title>
        <authorList>
            <person name="Touchon M."/>
            <person name="Hoede C."/>
            <person name="Tenaillon O."/>
            <person name="Barbe V."/>
            <person name="Baeriswyl S."/>
            <person name="Bidet P."/>
            <person name="Bingen E."/>
            <person name="Bonacorsi S."/>
            <person name="Bouchier C."/>
            <person name="Bouvet O."/>
            <person name="Calteau A."/>
            <person name="Chiapello H."/>
            <person name="Clermont O."/>
            <person name="Cruveiller S."/>
            <person name="Danchin A."/>
            <person name="Diard M."/>
            <person name="Dossat C."/>
            <person name="Karoui M.E."/>
            <person name="Frapy E."/>
            <person name="Garry L."/>
            <person name="Ghigo J.M."/>
            <person name="Gilles A.M."/>
            <person name="Johnson J."/>
            <person name="Le Bouguenec C."/>
            <person name="Lescat M."/>
            <person name="Mangenot S."/>
            <person name="Martinez-Jehanne V."/>
            <person name="Matic I."/>
            <person name="Nassif X."/>
            <person name="Oztas S."/>
            <person name="Petit M.A."/>
            <person name="Pichon C."/>
            <person name="Rouy Z."/>
            <person name="Ruf C.S."/>
            <person name="Schneider D."/>
            <person name="Tourret J."/>
            <person name="Vacherie B."/>
            <person name="Vallenet D."/>
            <person name="Medigue C."/>
            <person name="Rocha E.P.C."/>
            <person name="Denamur E."/>
        </authorList>
    </citation>
    <scope>NUCLEOTIDE SEQUENCE [LARGE SCALE GENOMIC DNA]</scope>
    <source>
        <strain>ATCC 35469 / DSM 13698 / BCRC 15582 / CCUG 18766 / IAM 14443 / JCM 21226 / LMG 7866 / NBRC 102419 / NCTC 12128 / CDC 0568-73</strain>
    </source>
</reference>
<feature type="chain" id="PRO_1000130757" description="RNase adapter protein RapZ">
    <location>
        <begin position="1"/>
        <end position="284"/>
    </location>
</feature>
<feature type="region of interest" description="RNA-binding" evidence="1">
    <location>
        <begin position="266"/>
        <end position="284"/>
    </location>
</feature>
<feature type="binding site" evidence="1">
    <location>
        <begin position="8"/>
        <end position="15"/>
    </location>
    <ligand>
        <name>ATP</name>
        <dbReference type="ChEBI" id="CHEBI:30616"/>
    </ligand>
</feature>
<feature type="binding site" evidence="1">
    <location>
        <begin position="56"/>
        <end position="59"/>
    </location>
    <ligand>
        <name>GTP</name>
        <dbReference type="ChEBI" id="CHEBI:37565"/>
    </ligand>
</feature>
<sequence>MVLMIVSGRSGSGKSVALRALEDMGFYCVDNLPVVLLPDLARTLAEREISAAVSIDVRNMPESPEIFEQAMTNLPEAFSPQLLFLDADRNTLIRRYSDTRRLHPLSSKNLSLESAIDKESDLLEPLRSRADLIVDTSEMSVHELAEMLRTRLLGKRERELTMVFESFGFKHGIPIDADYVFDVRFLPNPHWDPKLRPMTGLDKPVAAFLDRHTEVHNFIYQTRSYLELWLPMLETNNRSYLTVAIGCTGGKHRSVYIAEQLADYFRSRGKNVQSRHRTLEKRKT</sequence>
<comment type="function">
    <text evidence="1">Modulates the synthesis of GlmS, by affecting the processing and stability of the regulatory small RNA GlmZ. When glucosamine-6-phosphate (GlcN6P) concentrations are high in the cell, RapZ binds GlmZ and targets it to cleavage by RNase E. Consequently, GlmZ is inactivated and unable to activate GlmS synthesis. Under low GlcN6P concentrations, RapZ is sequestered and inactivated by an other regulatory small RNA, GlmY, preventing GlmZ degradation and leading to synthesis of GlmS.</text>
</comment>
<comment type="subunit">
    <text evidence="1">Homotrimer.</text>
</comment>
<comment type="similarity">
    <text evidence="1">Belongs to the RapZ-like family. RapZ subfamily.</text>
</comment>
<keyword id="KW-0067">ATP-binding</keyword>
<keyword id="KW-0342">GTP-binding</keyword>
<keyword id="KW-0547">Nucleotide-binding</keyword>
<keyword id="KW-0694">RNA-binding</keyword>
<organism>
    <name type="scientific">Escherichia fergusonii (strain ATCC 35469 / DSM 13698 / CCUG 18766 / IAM 14443 / JCM 21226 / LMG 7866 / NBRC 102419 / NCTC 12128 / CDC 0568-73)</name>
    <dbReference type="NCBI Taxonomy" id="585054"/>
    <lineage>
        <taxon>Bacteria</taxon>
        <taxon>Pseudomonadati</taxon>
        <taxon>Pseudomonadota</taxon>
        <taxon>Gammaproteobacteria</taxon>
        <taxon>Enterobacterales</taxon>
        <taxon>Enterobacteriaceae</taxon>
        <taxon>Escherichia</taxon>
    </lineage>
</organism>
<dbReference type="EMBL" id="CU928158">
    <property type="protein sequence ID" value="CAQ90675.1"/>
    <property type="molecule type" value="Genomic_DNA"/>
</dbReference>
<dbReference type="RefSeq" id="WP_000243750.1">
    <property type="nucleotide sequence ID" value="NC_011740.1"/>
</dbReference>
<dbReference type="SMR" id="B7LR72"/>
<dbReference type="GeneID" id="75060200"/>
<dbReference type="KEGG" id="efe:EFER_3182"/>
<dbReference type="HOGENOM" id="CLU_059558_1_1_6"/>
<dbReference type="OrthoDB" id="9784461at2"/>
<dbReference type="Proteomes" id="UP000000745">
    <property type="component" value="Chromosome"/>
</dbReference>
<dbReference type="GO" id="GO:0005524">
    <property type="term" value="F:ATP binding"/>
    <property type="evidence" value="ECO:0007669"/>
    <property type="project" value="UniProtKB-UniRule"/>
</dbReference>
<dbReference type="GO" id="GO:0005525">
    <property type="term" value="F:GTP binding"/>
    <property type="evidence" value="ECO:0007669"/>
    <property type="project" value="UniProtKB-UniRule"/>
</dbReference>
<dbReference type="GO" id="GO:0003723">
    <property type="term" value="F:RNA binding"/>
    <property type="evidence" value="ECO:0007669"/>
    <property type="project" value="UniProtKB-KW"/>
</dbReference>
<dbReference type="HAMAP" id="MF_00636">
    <property type="entry name" value="RapZ_like"/>
    <property type="match status" value="1"/>
</dbReference>
<dbReference type="InterPro" id="IPR027417">
    <property type="entry name" value="P-loop_NTPase"/>
</dbReference>
<dbReference type="InterPro" id="IPR005337">
    <property type="entry name" value="RapZ-like"/>
</dbReference>
<dbReference type="InterPro" id="IPR053930">
    <property type="entry name" value="RapZ-like_N"/>
</dbReference>
<dbReference type="InterPro" id="IPR053931">
    <property type="entry name" value="RapZ_C"/>
</dbReference>
<dbReference type="NCBIfam" id="NF003828">
    <property type="entry name" value="PRK05416.1"/>
    <property type="match status" value="1"/>
</dbReference>
<dbReference type="PANTHER" id="PTHR30448">
    <property type="entry name" value="RNASE ADAPTER PROTEIN RAPZ"/>
    <property type="match status" value="1"/>
</dbReference>
<dbReference type="PANTHER" id="PTHR30448:SF0">
    <property type="entry name" value="RNASE ADAPTER PROTEIN RAPZ"/>
    <property type="match status" value="1"/>
</dbReference>
<dbReference type="Pfam" id="PF22740">
    <property type="entry name" value="PapZ_C"/>
    <property type="match status" value="1"/>
</dbReference>
<dbReference type="Pfam" id="PF03668">
    <property type="entry name" value="RapZ-like_N"/>
    <property type="match status" value="1"/>
</dbReference>
<dbReference type="PIRSF" id="PIRSF005052">
    <property type="entry name" value="P-loopkin"/>
    <property type="match status" value="1"/>
</dbReference>
<dbReference type="SUPFAM" id="SSF52540">
    <property type="entry name" value="P-loop containing nucleoside triphosphate hydrolases"/>
    <property type="match status" value="1"/>
</dbReference>
<accession>B7LR72</accession>
<protein>
    <recommendedName>
        <fullName evidence="1">RNase adapter protein RapZ</fullName>
    </recommendedName>
</protein>
<evidence type="ECO:0000255" key="1">
    <source>
        <dbReference type="HAMAP-Rule" id="MF_00636"/>
    </source>
</evidence>